<feature type="chain" id="PRO_0000331275" description="Isochorismatase family protein 1A">
    <location>
        <begin position="1"/>
        <end position="206"/>
    </location>
</feature>
<name>ISC1A_DICDI</name>
<sequence length="206" mass="23552">MKSVGNLSPNTSLLFICDIQSKFENHIFKFNDVVGQSKYMIKICNELKVPIIFTEQYPKGLGHTVEDLLKERNENNQTKIFEKTLYSMCTNEVLNHLKQNHKDLKSILITGIETHVCVLQSTLDFLENGYDVHILSDAVSSNNNNDRLIALERMRQSGAFITTTETITFQLTKDAKHKSFKNIVPLSQERREYLLANPSLSSLSKL</sequence>
<reference key="1">
    <citation type="journal article" date="2005" name="Nature">
        <title>The genome of the social amoeba Dictyostelium discoideum.</title>
        <authorList>
            <person name="Eichinger L."/>
            <person name="Pachebat J.A."/>
            <person name="Gloeckner G."/>
            <person name="Rajandream M.A."/>
            <person name="Sucgang R."/>
            <person name="Berriman M."/>
            <person name="Song J."/>
            <person name="Olsen R."/>
            <person name="Szafranski K."/>
            <person name="Xu Q."/>
            <person name="Tunggal B."/>
            <person name="Kummerfeld S."/>
            <person name="Madera M."/>
            <person name="Konfortov B.A."/>
            <person name="Rivero F."/>
            <person name="Bankier A.T."/>
            <person name="Lehmann R."/>
            <person name="Hamlin N."/>
            <person name="Davies R."/>
            <person name="Gaudet P."/>
            <person name="Fey P."/>
            <person name="Pilcher K."/>
            <person name="Chen G."/>
            <person name="Saunders D."/>
            <person name="Sodergren E.J."/>
            <person name="Davis P."/>
            <person name="Kerhornou A."/>
            <person name="Nie X."/>
            <person name="Hall N."/>
            <person name="Anjard C."/>
            <person name="Hemphill L."/>
            <person name="Bason N."/>
            <person name="Farbrother P."/>
            <person name="Desany B."/>
            <person name="Just E."/>
            <person name="Morio T."/>
            <person name="Rost R."/>
            <person name="Churcher C.M."/>
            <person name="Cooper J."/>
            <person name="Haydock S."/>
            <person name="van Driessche N."/>
            <person name="Cronin A."/>
            <person name="Goodhead I."/>
            <person name="Muzny D.M."/>
            <person name="Mourier T."/>
            <person name="Pain A."/>
            <person name="Lu M."/>
            <person name="Harper D."/>
            <person name="Lindsay R."/>
            <person name="Hauser H."/>
            <person name="James K.D."/>
            <person name="Quiles M."/>
            <person name="Madan Babu M."/>
            <person name="Saito T."/>
            <person name="Buchrieser C."/>
            <person name="Wardroper A."/>
            <person name="Felder M."/>
            <person name="Thangavelu M."/>
            <person name="Johnson D."/>
            <person name="Knights A."/>
            <person name="Loulseged H."/>
            <person name="Mungall K.L."/>
            <person name="Oliver K."/>
            <person name="Price C."/>
            <person name="Quail M.A."/>
            <person name="Urushihara H."/>
            <person name="Hernandez J."/>
            <person name="Rabbinowitsch E."/>
            <person name="Steffen D."/>
            <person name="Sanders M."/>
            <person name="Ma J."/>
            <person name="Kohara Y."/>
            <person name="Sharp S."/>
            <person name="Simmonds M.N."/>
            <person name="Spiegler S."/>
            <person name="Tivey A."/>
            <person name="Sugano S."/>
            <person name="White B."/>
            <person name="Walker D."/>
            <person name="Woodward J.R."/>
            <person name="Winckler T."/>
            <person name="Tanaka Y."/>
            <person name="Shaulsky G."/>
            <person name="Schleicher M."/>
            <person name="Weinstock G.M."/>
            <person name="Rosenthal A."/>
            <person name="Cox E.C."/>
            <person name="Chisholm R.L."/>
            <person name="Gibbs R.A."/>
            <person name="Loomis W.F."/>
            <person name="Platzer M."/>
            <person name="Kay R.R."/>
            <person name="Williams J.G."/>
            <person name="Dear P.H."/>
            <person name="Noegel A.A."/>
            <person name="Barrell B.G."/>
            <person name="Kuspa A."/>
        </authorList>
    </citation>
    <scope>NUCLEOTIDE SEQUENCE [LARGE SCALE GENOMIC DNA]</scope>
    <source>
        <strain>AX4</strain>
    </source>
</reference>
<keyword id="KW-1185">Reference proteome</keyword>
<organism>
    <name type="scientific">Dictyostelium discoideum</name>
    <name type="common">Social amoeba</name>
    <dbReference type="NCBI Taxonomy" id="44689"/>
    <lineage>
        <taxon>Eukaryota</taxon>
        <taxon>Amoebozoa</taxon>
        <taxon>Evosea</taxon>
        <taxon>Eumycetozoa</taxon>
        <taxon>Dictyostelia</taxon>
        <taxon>Dictyosteliales</taxon>
        <taxon>Dictyosteliaceae</taxon>
        <taxon>Dictyostelium</taxon>
    </lineage>
</organism>
<comment type="similarity">
    <text evidence="1">Belongs to the isochorismatase family.</text>
</comment>
<dbReference type="EMBL" id="AAFI02000073">
    <property type="protein sequence ID" value="EAL64984.1"/>
    <property type="molecule type" value="Genomic_DNA"/>
</dbReference>
<dbReference type="RefSeq" id="XP_639921.1">
    <property type="nucleotide sequence ID" value="XM_634829.1"/>
</dbReference>
<dbReference type="SMR" id="Q54NZ6"/>
<dbReference type="FunCoup" id="Q54NZ6">
    <property type="interactions" value="119"/>
</dbReference>
<dbReference type="STRING" id="44689.Q54NZ6"/>
<dbReference type="PaxDb" id="44689-DDB0215797"/>
<dbReference type="EnsemblProtists" id="EAL64984">
    <property type="protein sequence ID" value="EAL64984"/>
    <property type="gene ID" value="DDB_G0285041"/>
</dbReference>
<dbReference type="GeneID" id="8624833"/>
<dbReference type="KEGG" id="ddi:DDB_G0285041"/>
<dbReference type="dictyBase" id="DDB_G0285041"/>
<dbReference type="VEuPathDB" id="AmoebaDB:DDB_G0285041"/>
<dbReference type="eggNOG" id="KOG4044">
    <property type="taxonomic scope" value="Eukaryota"/>
</dbReference>
<dbReference type="HOGENOM" id="CLU_066901_0_1_1"/>
<dbReference type="InParanoid" id="Q54NZ6"/>
<dbReference type="OMA" id="QHACANI"/>
<dbReference type="PhylomeDB" id="Q54NZ6"/>
<dbReference type="PRO" id="PR:Q54NZ6"/>
<dbReference type="Proteomes" id="UP000002195">
    <property type="component" value="Chromosome 4"/>
</dbReference>
<dbReference type="Gene3D" id="3.40.50.850">
    <property type="entry name" value="Isochorismatase-like"/>
    <property type="match status" value="1"/>
</dbReference>
<dbReference type="InterPro" id="IPR000868">
    <property type="entry name" value="Isochorismatase-like_dom"/>
</dbReference>
<dbReference type="InterPro" id="IPR036380">
    <property type="entry name" value="Isochorismatase-like_sf"/>
</dbReference>
<dbReference type="InterPro" id="IPR050993">
    <property type="entry name" value="Isochorismatase_domain"/>
</dbReference>
<dbReference type="PANTHER" id="PTHR14119">
    <property type="entry name" value="HYDROLASE"/>
    <property type="match status" value="1"/>
</dbReference>
<dbReference type="PANTHER" id="PTHR14119:SF3">
    <property type="entry name" value="ISOCHORISMATASE DOMAIN-CONTAINING PROTEIN 2"/>
    <property type="match status" value="1"/>
</dbReference>
<dbReference type="Pfam" id="PF00857">
    <property type="entry name" value="Isochorismatase"/>
    <property type="match status" value="1"/>
</dbReference>
<dbReference type="SUPFAM" id="SSF52499">
    <property type="entry name" value="Isochorismatase-like hydrolases"/>
    <property type="match status" value="1"/>
</dbReference>
<gene>
    <name type="ORF">DDB_G0285041</name>
</gene>
<evidence type="ECO:0000305" key="1"/>
<accession>Q54NZ6</accession>
<proteinExistence type="inferred from homology"/>
<protein>
    <recommendedName>
        <fullName>Isochorismatase family protein 1A</fullName>
    </recommendedName>
</protein>